<sequence length="527" mass="59571">MLRFLRRTFGRRSMQRYARGAAGRGAAGLGDERDGGPRGGPAAAASSSVLPAAPGGSVFPAGGGPLLTGGAAVHISASGAAKATLYCRVFLLDGTEVSVDLPKHAKGQDLFDQIVYHLDLVETDYFGLQFLDSAQVTHWLDHSKPIKKQMKVGPAYALHFRVKYYSSEPNNLREEFTRYLFVLQLRHDILSGKLKCPYETAVELAALCLQAELGECELPEHTPELVSEFRFIPNQTEAMEFDIFQRWKEYRGKSPAQAELSYLNKAKWLEMYGVDMHVVRGRDGCEYSLGLTPTGILIFEGANKIGLFFWPKITKMDFKKSKLTLVVVEDDDQGREQEHTFVFRLDSARTCKHLWKCAVEHHAFFRLRTPSNSKSARSDFIRLGSRFRFSGRTEYQATHGSRLRRTSTFERKPSKRYPSRRHSTFKASNPVIAAQLCSKTNPEVHNYQPQFHPNVHPSQPRWRPHSPNVSNHSTCKQNKPSFQDDRPHWKASASGDDGHFDYVHDQNQRNLGGAYSVTYRDKLMTAL</sequence>
<reference key="1">
    <citation type="journal article" date="2004" name="Genome Res.">
        <title>The status, quality, and expansion of the NIH full-length cDNA project: the Mammalian Gene Collection (MGC).</title>
        <authorList>
            <consortium name="The MGC Project Team"/>
        </authorList>
    </citation>
    <scope>NUCLEOTIDE SEQUENCE [LARGE SCALE MRNA]</scope>
    <source>
        <tissue>Prostate</tissue>
    </source>
</reference>
<comment type="function">
    <text evidence="1 2">Up-regulates the activity of the Rho guanine nucleotide exchange factor ARHGEF18. Involved in the regulation of the circumferential actomyosin belt in epithelial cells. Promotes cellular adhesion, migration and motility in vitro and may play a role in wound healing. May have a role in mediating cytoskeletal changes associated with steroid-induced cell differentiation.</text>
</comment>
<comment type="subunit">
    <text evidence="2">Interacts (via FERM domain) with ARHGEF18 (via C-terminus); the interaction activates ARHGEF18.</text>
</comment>
<comment type="subcellular location">
    <subcellularLocation>
        <location evidence="1">Cytoplasm</location>
    </subcellularLocation>
    <subcellularLocation>
        <location evidence="1">Cell junction</location>
        <location evidence="1">Tight junction</location>
    </subcellularLocation>
    <text evidence="1">Accumulates along apical cell-cell boundaries and is also detected in the cytoplasm in a punctate manner.</text>
</comment>
<comment type="PTM">
    <text evidence="2">May be negatively regulated by phosphorylation.</text>
</comment>
<keyword id="KW-0965">Cell junction</keyword>
<keyword id="KW-0963">Cytoplasm</keyword>
<keyword id="KW-0597">Phosphoprotein</keyword>
<keyword id="KW-1185">Reference proteome</keyword>
<keyword id="KW-0796">Tight junction</keyword>
<proteinExistence type="evidence at transcript level"/>
<evidence type="ECO:0000250" key="1">
    <source>
        <dbReference type="UniProtKB" id="Q9H329"/>
    </source>
</evidence>
<evidence type="ECO:0000250" key="2">
    <source>
        <dbReference type="UniProtKB" id="Q9JMC8"/>
    </source>
</evidence>
<evidence type="ECO:0000255" key="3">
    <source>
        <dbReference type="PROSITE-ProRule" id="PRU00084"/>
    </source>
</evidence>
<evidence type="ECO:0000256" key="4">
    <source>
        <dbReference type="SAM" id="MobiDB-lite"/>
    </source>
</evidence>
<evidence type="ECO:0000312" key="5">
    <source>
        <dbReference type="RGD" id="1562988"/>
    </source>
</evidence>
<feature type="chain" id="PRO_0000352794" description="Band 4.1-like protein 4B">
    <location>
        <begin position="1"/>
        <end position="527"/>
    </location>
</feature>
<feature type="domain" description="FERM" evidence="3">
    <location>
        <begin position="85"/>
        <end position="369"/>
    </location>
</feature>
<feature type="region of interest" description="Disordered" evidence="4">
    <location>
        <begin position="23"/>
        <end position="47"/>
    </location>
</feature>
<feature type="region of interest" description="Disordered" evidence="4">
    <location>
        <begin position="400"/>
        <end position="425"/>
    </location>
</feature>
<feature type="region of interest" description="Disordered" evidence="4">
    <location>
        <begin position="455"/>
        <end position="493"/>
    </location>
</feature>
<feature type="compositionally biased region" description="Basic residues" evidence="4">
    <location>
        <begin position="413"/>
        <end position="424"/>
    </location>
</feature>
<feature type="compositionally biased region" description="Polar residues" evidence="4">
    <location>
        <begin position="467"/>
        <end position="481"/>
    </location>
</feature>
<organism>
    <name type="scientific">Rattus norvegicus</name>
    <name type="common">Rat</name>
    <dbReference type="NCBI Taxonomy" id="10116"/>
    <lineage>
        <taxon>Eukaryota</taxon>
        <taxon>Metazoa</taxon>
        <taxon>Chordata</taxon>
        <taxon>Craniata</taxon>
        <taxon>Vertebrata</taxon>
        <taxon>Euteleostomi</taxon>
        <taxon>Mammalia</taxon>
        <taxon>Eutheria</taxon>
        <taxon>Euarchontoglires</taxon>
        <taxon>Glires</taxon>
        <taxon>Rodentia</taxon>
        <taxon>Myomorpha</taxon>
        <taxon>Muroidea</taxon>
        <taxon>Muridae</taxon>
        <taxon>Murinae</taxon>
        <taxon>Rattus</taxon>
    </lineage>
</organism>
<gene>
    <name evidence="5" type="primary">Epb41l4b</name>
    <name evidence="1" type="synonym">Lulu2</name>
</gene>
<protein>
    <recommendedName>
        <fullName>Band 4.1-like protein 4B</fullName>
    </recommendedName>
    <alternativeName>
        <fullName evidence="5">Erythrocyte membrane protein band 4.1-like 4B</fullName>
    </alternativeName>
</protein>
<name>E41LB_RAT</name>
<dbReference type="EMBL" id="BC166749">
    <property type="protein sequence ID" value="AAI66749.1"/>
    <property type="molecule type" value="mRNA"/>
</dbReference>
<dbReference type="RefSeq" id="NP_001121037.1">
    <property type="nucleotide sequence ID" value="NM_001127565.2"/>
</dbReference>
<dbReference type="SMR" id="B2RYE5"/>
<dbReference type="FunCoup" id="B2RYE5">
    <property type="interactions" value="525"/>
</dbReference>
<dbReference type="STRING" id="10116.ENSRNOP00000072639"/>
<dbReference type="iPTMnet" id="B2RYE5"/>
<dbReference type="PhosphoSitePlus" id="B2RYE5"/>
<dbReference type="PaxDb" id="10116-ENSRNOP00000015114"/>
<dbReference type="PeptideAtlas" id="B2RYE5"/>
<dbReference type="Ensembl" id="ENSRNOT00000088169.2">
    <property type="protein sequence ID" value="ENSRNOP00000068924.2"/>
    <property type="gene ID" value="ENSRNOG00000056550.2"/>
</dbReference>
<dbReference type="GeneID" id="500464"/>
<dbReference type="KEGG" id="rno:500464"/>
<dbReference type="UCSC" id="RGD:1562988">
    <property type="organism name" value="rat"/>
</dbReference>
<dbReference type="AGR" id="RGD:1562988"/>
<dbReference type="CTD" id="54566"/>
<dbReference type="RGD" id="1562988">
    <property type="gene designation" value="Epb41l4b"/>
</dbReference>
<dbReference type="eggNOG" id="KOG3530">
    <property type="taxonomic scope" value="Eukaryota"/>
</dbReference>
<dbReference type="GeneTree" id="ENSGT00940000158331"/>
<dbReference type="InParanoid" id="B2RYE5"/>
<dbReference type="OMA" id="CPADGMD"/>
<dbReference type="PhylomeDB" id="B2RYE5"/>
<dbReference type="PRO" id="PR:B2RYE5"/>
<dbReference type="Proteomes" id="UP000002494">
    <property type="component" value="Chromosome 5"/>
</dbReference>
<dbReference type="GO" id="GO:0045177">
    <property type="term" value="C:apical part of cell"/>
    <property type="evidence" value="ECO:0000266"/>
    <property type="project" value="RGD"/>
</dbReference>
<dbReference type="GO" id="GO:0005923">
    <property type="term" value="C:bicellular tight junction"/>
    <property type="evidence" value="ECO:0007669"/>
    <property type="project" value="UniProtKB-SubCell"/>
</dbReference>
<dbReference type="GO" id="GO:0005737">
    <property type="term" value="C:cytoplasm"/>
    <property type="evidence" value="ECO:0000266"/>
    <property type="project" value="RGD"/>
</dbReference>
<dbReference type="GO" id="GO:0005856">
    <property type="term" value="C:cytoskeleton"/>
    <property type="evidence" value="ECO:0000318"/>
    <property type="project" value="GO_Central"/>
</dbReference>
<dbReference type="GO" id="GO:0008092">
    <property type="term" value="F:cytoskeletal protein binding"/>
    <property type="evidence" value="ECO:0007669"/>
    <property type="project" value="InterPro"/>
</dbReference>
<dbReference type="GO" id="GO:0031032">
    <property type="term" value="P:actomyosin structure organization"/>
    <property type="evidence" value="ECO:0000266"/>
    <property type="project" value="RGD"/>
</dbReference>
<dbReference type="GO" id="GO:0045785">
    <property type="term" value="P:positive regulation of cell adhesion"/>
    <property type="evidence" value="ECO:0000266"/>
    <property type="project" value="RGD"/>
</dbReference>
<dbReference type="GO" id="GO:0010628">
    <property type="term" value="P:positive regulation of gene expression"/>
    <property type="evidence" value="ECO:0000266"/>
    <property type="project" value="RGD"/>
</dbReference>
<dbReference type="GO" id="GO:0051549">
    <property type="term" value="P:positive regulation of keratinocyte migration"/>
    <property type="evidence" value="ECO:0000266"/>
    <property type="project" value="RGD"/>
</dbReference>
<dbReference type="GO" id="GO:0042060">
    <property type="term" value="P:wound healing"/>
    <property type="evidence" value="ECO:0000266"/>
    <property type="project" value="RGD"/>
</dbReference>
<dbReference type="CDD" id="cd14473">
    <property type="entry name" value="FERM_B-lobe"/>
    <property type="match status" value="1"/>
</dbReference>
<dbReference type="CDD" id="cd13186">
    <property type="entry name" value="FERM_C_NBL4_NBL5"/>
    <property type="match status" value="1"/>
</dbReference>
<dbReference type="CDD" id="cd17204">
    <property type="entry name" value="FERM_F1_EPB41L4B"/>
    <property type="match status" value="1"/>
</dbReference>
<dbReference type="FunFam" id="2.30.29.30:FF:000002">
    <property type="entry name" value="Band 4.1-like protein 5 isoform 1"/>
    <property type="match status" value="1"/>
</dbReference>
<dbReference type="FunFam" id="3.10.20.90:FF:000024">
    <property type="entry name" value="Erythrocyte membrane protein band 4.1-like 5"/>
    <property type="match status" value="1"/>
</dbReference>
<dbReference type="FunFam" id="1.20.80.10:FF:000003">
    <property type="entry name" value="Tyrosine-protein phosphatase non-receptor type 4"/>
    <property type="match status" value="1"/>
</dbReference>
<dbReference type="Gene3D" id="1.20.80.10">
    <property type="match status" value="1"/>
</dbReference>
<dbReference type="Gene3D" id="3.10.20.90">
    <property type="entry name" value="Phosphatidylinositol 3-kinase Catalytic Subunit, Chain A, domain 1"/>
    <property type="match status" value="1"/>
</dbReference>
<dbReference type="Gene3D" id="2.30.29.30">
    <property type="entry name" value="Pleckstrin-homology domain (PH domain)/Phosphotyrosine-binding domain (PTB)"/>
    <property type="match status" value="1"/>
</dbReference>
<dbReference type="InterPro" id="IPR019749">
    <property type="entry name" value="Band_41_domain"/>
</dbReference>
<dbReference type="InterPro" id="IPR030698">
    <property type="entry name" value="EHM2_FERM_F1"/>
</dbReference>
<dbReference type="InterPro" id="IPR000798">
    <property type="entry name" value="Ez/rad/moesin-like"/>
</dbReference>
<dbReference type="InterPro" id="IPR014847">
    <property type="entry name" value="FA"/>
</dbReference>
<dbReference type="InterPro" id="IPR014352">
    <property type="entry name" value="FERM/acyl-CoA-bd_prot_sf"/>
</dbReference>
<dbReference type="InterPro" id="IPR035963">
    <property type="entry name" value="FERM_2"/>
</dbReference>
<dbReference type="InterPro" id="IPR019748">
    <property type="entry name" value="FERM_central"/>
</dbReference>
<dbReference type="InterPro" id="IPR019747">
    <property type="entry name" value="FERM_CS"/>
</dbReference>
<dbReference type="InterPro" id="IPR000299">
    <property type="entry name" value="FERM_domain"/>
</dbReference>
<dbReference type="InterPro" id="IPR018979">
    <property type="entry name" value="FERM_N"/>
</dbReference>
<dbReference type="InterPro" id="IPR018980">
    <property type="entry name" value="FERM_PH-like_C"/>
</dbReference>
<dbReference type="InterPro" id="IPR011993">
    <property type="entry name" value="PH-like_dom_sf"/>
</dbReference>
<dbReference type="InterPro" id="IPR029071">
    <property type="entry name" value="Ubiquitin-like_domsf"/>
</dbReference>
<dbReference type="PANTHER" id="PTHR23280">
    <property type="entry name" value="4.1 G PROTEIN"/>
    <property type="match status" value="1"/>
</dbReference>
<dbReference type="PANTHER" id="PTHR23280:SF18">
    <property type="entry name" value="BAND 4.1-LIKE PROTEIN 4B"/>
    <property type="match status" value="1"/>
</dbReference>
<dbReference type="Pfam" id="PF08736">
    <property type="entry name" value="FA"/>
    <property type="match status" value="1"/>
</dbReference>
<dbReference type="Pfam" id="PF09380">
    <property type="entry name" value="FERM_C"/>
    <property type="match status" value="1"/>
</dbReference>
<dbReference type="Pfam" id="PF00373">
    <property type="entry name" value="FERM_M"/>
    <property type="match status" value="1"/>
</dbReference>
<dbReference type="Pfam" id="PF09379">
    <property type="entry name" value="FERM_N"/>
    <property type="match status" value="1"/>
</dbReference>
<dbReference type="PRINTS" id="PR00935">
    <property type="entry name" value="BAND41"/>
</dbReference>
<dbReference type="PRINTS" id="PR00661">
    <property type="entry name" value="ERMFAMILY"/>
</dbReference>
<dbReference type="SMART" id="SM00295">
    <property type="entry name" value="B41"/>
    <property type="match status" value="1"/>
</dbReference>
<dbReference type="SMART" id="SM01195">
    <property type="entry name" value="FA"/>
    <property type="match status" value="1"/>
</dbReference>
<dbReference type="SMART" id="SM01196">
    <property type="entry name" value="FERM_C"/>
    <property type="match status" value="1"/>
</dbReference>
<dbReference type="SUPFAM" id="SSF50729">
    <property type="entry name" value="PH domain-like"/>
    <property type="match status" value="1"/>
</dbReference>
<dbReference type="SUPFAM" id="SSF47031">
    <property type="entry name" value="Second domain of FERM"/>
    <property type="match status" value="1"/>
</dbReference>
<dbReference type="SUPFAM" id="SSF54236">
    <property type="entry name" value="Ubiquitin-like"/>
    <property type="match status" value="1"/>
</dbReference>
<dbReference type="PROSITE" id="PS00661">
    <property type="entry name" value="FERM_2"/>
    <property type="match status" value="1"/>
</dbReference>
<dbReference type="PROSITE" id="PS50057">
    <property type="entry name" value="FERM_3"/>
    <property type="match status" value="1"/>
</dbReference>
<accession>B2RYE5</accession>